<name>TYSY_CERS5</name>
<evidence type="ECO:0000255" key="1">
    <source>
        <dbReference type="HAMAP-Rule" id="MF_00008"/>
    </source>
</evidence>
<reference key="1">
    <citation type="submission" date="2007-04" db="EMBL/GenBank/DDBJ databases">
        <title>Complete sequence of chromosome of Rhodobacter sphaeroides ATCC 17025.</title>
        <authorList>
            <consortium name="US DOE Joint Genome Institute"/>
            <person name="Copeland A."/>
            <person name="Lucas S."/>
            <person name="Lapidus A."/>
            <person name="Barry K."/>
            <person name="Detter J.C."/>
            <person name="Glavina del Rio T."/>
            <person name="Hammon N."/>
            <person name="Israni S."/>
            <person name="Dalin E."/>
            <person name="Tice H."/>
            <person name="Pitluck S."/>
            <person name="Chertkov O."/>
            <person name="Brettin T."/>
            <person name="Bruce D."/>
            <person name="Han C."/>
            <person name="Schmutz J."/>
            <person name="Larimer F."/>
            <person name="Land M."/>
            <person name="Hauser L."/>
            <person name="Kyrpides N."/>
            <person name="Kim E."/>
            <person name="Richardson P."/>
            <person name="Mackenzie C."/>
            <person name="Choudhary M."/>
            <person name="Donohue T.J."/>
            <person name="Kaplan S."/>
        </authorList>
    </citation>
    <scope>NUCLEOTIDE SEQUENCE [LARGE SCALE GENOMIC DNA]</scope>
    <source>
        <strain>ATCC 17025 / ATH 2.4.3</strain>
    </source>
</reference>
<protein>
    <recommendedName>
        <fullName evidence="1">Thymidylate synthase</fullName>
        <shortName evidence="1">TS</shortName>
        <shortName evidence="1">TSase</shortName>
        <ecNumber evidence="1">2.1.1.45</ecNumber>
    </recommendedName>
</protein>
<accession>A4WQT6</accession>
<keyword id="KW-0963">Cytoplasm</keyword>
<keyword id="KW-0489">Methyltransferase</keyword>
<keyword id="KW-0545">Nucleotide biosynthesis</keyword>
<keyword id="KW-0808">Transferase</keyword>
<gene>
    <name evidence="1" type="primary">thyA</name>
    <name type="ordered locus">Rsph17025_0846</name>
</gene>
<organism>
    <name type="scientific">Cereibacter sphaeroides (strain ATCC 17025 / ATH 2.4.3)</name>
    <name type="common">Rhodobacter sphaeroides</name>
    <dbReference type="NCBI Taxonomy" id="349102"/>
    <lineage>
        <taxon>Bacteria</taxon>
        <taxon>Pseudomonadati</taxon>
        <taxon>Pseudomonadota</taxon>
        <taxon>Alphaproteobacteria</taxon>
        <taxon>Rhodobacterales</taxon>
        <taxon>Paracoccaceae</taxon>
        <taxon>Cereibacter</taxon>
    </lineage>
</organism>
<feature type="chain" id="PRO_0000321479" description="Thymidylate synthase">
    <location>
        <begin position="1"/>
        <end position="298"/>
    </location>
</feature>
<feature type="active site" description="Nucleophile" evidence="1">
    <location>
        <position position="179"/>
    </location>
</feature>
<feature type="binding site" description="in other chain" evidence="1">
    <location>
        <position position="25"/>
    </location>
    <ligand>
        <name>dUMP</name>
        <dbReference type="ChEBI" id="CHEBI:246422"/>
        <note>ligand shared between dimeric partners</note>
    </ligand>
</feature>
<feature type="binding site" evidence="1">
    <location>
        <begin position="159"/>
        <end position="160"/>
    </location>
    <ligand>
        <name>dUMP</name>
        <dbReference type="ChEBI" id="CHEBI:246422"/>
        <note>ligand shared between dimeric partners</note>
    </ligand>
</feature>
<feature type="binding site" description="in other chain" evidence="1">
    <location>
        <begin position="200"/>
        <end position="203"/>
    </location>
    <ligand>
        <name>dUMP</name>
        <dbReference type="ChEBI" id="CHEBI:246422"/>
        <note>ligand shared between dimeric partners</note>
    </ligand>
</feature>
<feature type="binding site" evidence="1">
    <location>
        <position position="203"/>
    </location>
    <ligand>
        <name>(6R)-5,10-methylene-5,6,7,8-tetrahydrofolate</name>
        <dbReference type="ChEBI" id="CHEBI:15636"/>
    </ligand>
</feature>
<feature type="binding site" description="in other chain" evidence="1">
    <location>
        <position position="211"/>
    </location>
    <ligand>
        <name>dUMP</name>
        <dbReference type="ChEBI" id="CHEBI:246422"/>
        <note>ligand shared between dimeric partners</note>
    </ligand>
</feature>
<feature type="binding site" description="in other chain" evidence="1">
    <location>
        <begin position="241"/>
        <end position="243"/>
    </location>
    <ligand>
        <name>dUMP</name>
        <dbReference type="ChEBI" id="CHEBI:246422"/>
        <note>ligand shared between dimeric partners</note>
    </ligand>
</feature>
<feature type="binding site" evidence="1">
    <location>
        <position position="297"/>
    </location>
    <ligand>
        <name>(6R)-5,10-methylene-5,6,7,8-tetrahydrofolate</name>
        <dbReference type="ChEBI" id="CHEBI:15636"/>
    </ligand>
</feature>
<dbReference type="EC" id="2.1.1.45" evidence="1"/>
<dbReference type="EMBL" id="CP000661">
    <property type="protein sequence ID" value="ABP69750.1"/>
    <property type="molecule type" value="Genomic_DNA"/>
</dbReference>
<dbReference type="SMR" id="A4WQT6"/>
<dbReference type="STRING" id="349102.Rsph17025_0846"/>
<dbReference type="KEGG" id="rsq:Rsph17025_0846"/>
<dbReference type="eggNOG" id="COG0207">
    <property type="taxonomic scope" value="Bacteria"/>
</dbReference>
<dbReference type="HOGENOM" id="CLU_021669_0_0_5"/>
<dbReference type="BioCyc" id="RSPH349102:G1G8M-869-MONOMER"/>
<dbReference type="UniPathway" id="UPA00575"/>
<dbReference type="GO" id="GO:0005829">
    <property type="term" value="C:cytosol"/>
    <property type="evidence" value="ECO:0007669"/>
    <property type="project" value="TreeGrafter"/>
</dbReference>
<dbReference type="GO" id="GO:0004799">
    <property type="term" value="F:thymidylate synthase activity"/>
    <property type="evidence" value="ECO:0007669"/>
    <property type="project" value="UniProtKB-UniRule"/>
</dbReference>
<dbReference type="GO" id="GO:0006231">
    <property type="term" value="P:dTMP biosynthetic process"/>
    <property type="evidence" value="ECO:0007669"/>
    <property type="project" value="UniProtKB-UniRule"/>
</dbReference>
<dbReference type="GO" id="GO:0006235">
    <property type="term" value="P:dTTP biosynthetic process"/>
    <property type="evidence" value="ECO:0007669"/>
    <property type="project" value="UniProtKB-UniRule"/>
</dbReference>
<dbReference type="GO" id="GO:0032259">
    <property type="term" value="P:methylation"/>
    <property type="evidence" value="ECO:0007669"/>
    <property type="project" value="UniProtKB-KW"/>
</dbReference>
<dbReference type="CDD" id="cd00351">
    <property type="entry name" value="TS_Pyrimidine_HMase"/>
    <property type="match status" value="1"/>
</dbReference>
<dbReference type="Gene3D" id="3.30.572.10">
    <property type="entry name" value="Thymidylate synthase/dCMP hydroxymethylase domain"/>
    <property type="match status" value="1"/>
</dbReference>
<dbReference type="HAMAP" id="MF_00008">
    <property type="entry name" value="Thymidy_synth_bact"/>
    <property type="match status" value="1"/>
</dbReference>
<dbReference type="InterPro" id="IPR045097">
    <property type="entry name" value="Thymidate_synth/dCMP_Mease"/>
</dbReference>
<dbReference type="InterPro" id="IPR023451">
    <property type="entry name" value="Thymidate_synth/dCMP_Mease_dom"/>
</dbReference>
<dbReference type="InterPro" id="IPR036926">
    <property type="entry name" value="Thymidate_synth/dCMP_Mease_sf"/>
</dbReference>
<dbReference type="InterPro" id="IPR000398">
    <property type="entry name" value="Thymidylate_synthase"/>
</dbReference>
<dbReference type="InterPro" id="IPR020940">
    <property type="entry name" value="Thymidylate_synthase_AS"/>
</dbReference>
<dbReference type="NCBIfam" id="NF002497">
    <property type="entry name" value="PRK01827.1-3"/>
    <property type="match status" value="1"/>
</dbReference>
<dbReference type="NCBIfam" id="TIGR03284">
    <property type="entry name" value="thym_sym"/>
    <property type="match status" value="1"/>
</dbReference>
<dbReference type="PANTHER" id="PTHR11548">
    <property type="entry name" value="THYMIDYLATE SYNTHASE 1"/>
    <property type="match status" value="1"/>
</dbReference>
<dbReference type="PANTHER" id="PTHR11548:SF1">
    <property type="entry name" value="THYMIDYLATE SYNTHASE 1"/>
    <property type="match status" value="1"/>
</dbReference>
<dbReference type="Pfam" id="PF00303">
    <property type="entry name" value="Thymidylat_synt"/>
    <property type="match status" value="1"/>
</dbReference>
<dbReference type="PRINTS" id="PR00108">
    <property type="entry name" value="THYMDSNTHASE"/>
</dbReference>
<dbReference type="SUPFAM" id="SSF55831">
    <property type="entry name" value="Thymidylate synthase/dCMP hydroxymethylase"/>
    <property type="match status" value="1"/>
</dbReference>
<dbReference type="PROSITE" id="PS00091">
    <property type="entry name" value="THYMIDYLATE_SYNTHASE"/>
    <property type="match status" value="1"/>
</dbReference>
<comment type="function">
    <text evidence="1">Catalyzes the reductive methylation of 2'-deoxyuridine-5'-monophosphate (dUMP) to 2'-deoxythymidine-5'-monophosphate (dTMP) while utilizing 5,10-methylenetetrahydrofolate (mTHF) as the methyl donor and reductant in the reaction, yielding dihydrofolate (DHF) as a by-product. This enzymatic reaction provides an intracellular de novo source of dTMP, an essential precursor for DNA biosynthesis.</text>
</comment>
<comment type="catalytic activity">
    <reaction evidence="1">
        <text>dUMP + (6R)-5,10-methylene-5,6,7,8-tetrahydrofolate = 7,8-dihydrofolate + dTMP</text>
        <dbReference type="Rhea" id="RHEA:12104"/>
        <dbReference type="ChEBI" id="CHEBI:15636"/>
        <dbReference type="ChEBI" id="CHEBI:57451"/>
        <dbReference type="ChEBI" id="CHEBI:63528"/>
        <dbReference type="ChEBI" id="CHEBI:246422"/>
        <dbReference type="EC" id="2.1.1.45"/>
    </reaction>
</comment>
<comment type="pathway">
    <text evidence="1">Pyrimidine metabolism; dTTP biosynthesis.</text>
</comment>
<comment type="subunit">
    <text evidence="1">Homodimer.</text>
</comment>
<comment type="subcellular location">
    <subcellularLocation>
        <location evidence="1">Cytoplasm</location>
    </subcellularLocation>
</comment>
<comment type="similarity">
    <text evidence="1">Belongs to the thymidylate synthase family. Bacterial-type ThyA subfamily.</text>
</comment>
<proteinExistence type="inferred from homology"/>
<sequence length="298" mass="33712">MAHPEQHYLDLLAQVLARGDRRVDRTGVGTLSLFGAMLRFDLSKGAAPILTTKKVYWKTAVKEMLWFLTGGTNIRPLLQQNVRIWTDWPLAAYRRATGEEIGQAEFEARIVADEGFAARWGDLGPVYGKQWRRWLGPDGREHDQIAGLIETLRTNPASRRMLFHAWNVAEVGQMALPPCHMVYQYHVTSDGRLNALLYQRSVDLLLGAPFNFVGAAALQLMIAQQADLLPGELVWVGGDTHLYLNHLEQAREQISRAPRDWPRMQLVRRAESIDDYRIEDFAVEGYESHPAIAAEVAV</sequence>